<name>P20D1_XENTR</name>
<gene>
    <name evidence="2" type="primary">pm20d1</name>
</gene>
<proteinExistence type="evidence at transcript level"/>
<protein>
    <recommendedName>
        <fullName evidence="4">N-fatty-acyl-amino acid synthase/hydrolase PM20D1</fullName>
        <ecNumber evidence="2">3.5.1.114</ecNumber>
        <ecNumber evidence="2">3.5.1.14</ecNumber>
    </recommendedName>
    <alternativeName>
        <fullName evidence="2">Peptidase M20 domain-containing protein 1</fullName>
    </alternativeName>
</protein>
<feature type="signal peptide" evidence="3">
    <location>
        <begin position="1"/>
        <end position="34"/>
    </location>
</feature>
<feature type="chain" id="PRO_0000321932" description="N-fatty-acyl-amino acid synthase/hydrolase PM20D1">
    <location>
        <begin position="35"/>
        <end position="512"/>
    </location>
</feature>
<feature type="active site" evidence="1">
    <location>
        <position position="136"/>
    </location>
</feature>
<feature type="active site" description="Proton acceptor" evidence="1">
    <location>
        <position position="200"/>
    </location>
</feature>
<feature type="binding site" evidence="1">
    <location>
        <position position="134"/>
    </location>
    <ligand>
        <name>Zn(2+)</name>
        <dbReference type="ChEBI" id="CHEBI:29105"/>
        <label>2</label>
    </ligand>
</feature>
<feature type="binding site" evidence="1">
    <location>
        <position position="166"/>
    </location>
    <ligand>
        <name>Zn(2+)</name>
        <dbReference type="ChEBI" id="CHEBI:29105"/>
        <label>1</label>
    </ligand>
</feature>
<feature type="binding site" evidence="1">
    <location>
        <position position="166"/>
    </location>
    <ligand>
        <name>Zn(2+)</name>
        <dbReference type="ChEBI" id="CHEBI:29105"/>
        <label>2</label>
    </ligand>
</feature>
<feature type="binding site" evidence="1">
    <location>
        <position position="201"/>
    </location>
    <ligand>
        <name>Zn(2+)</name>
        <dbReference type="ChEBI" id="CHEBI:29105"/>
        <label>1</label>
    </ligand>
</feature>
<feature type="binding site" evidence="1">
    <location>
        <position position="227"/>
    </location>
    <ligand>
        <name>Zn(2+)</name>
        <dbReference type="ChEBI" id="CHEBI:29105"/>
        <label>2</label>
    </ligand>
</feature>
<feature type="binding site" evidence="1">
    <location>
        <position position="472"/>
    </location>
    <ligand>
        <name>Zn(2+)</name>
        <dbReference type="ChEBI" id="CHEBI:29105"/>
        <label>1</label>
    </ligand>
</feature>
<feature type="glycosylation site" description="N-linked (GlcNAc...) asparagine" evidence="3">
    <location>
        <position position="45"/>
    </location>
</feature>
<feature type="glycosylation site" description="N-linked (GlcNAc...) asparagine" evidence="3">
    <location>
        <position position="81"/>
    </location>
</feature>
<feature type="glycosylation site" description="N-linked (GlcNAc...) asparagine" evidence="3">
    <location>
        <position position="450"/>
    </location>
</feature>
<reference key="1">
    <citation type="submission" date="2006-10" db="EMBL/GenBank/DDBJ databases">
        <authorList>
            <consortium name="NIH - Xenopus Gene Collection (XGC) project"/>
        </authorList>
    </citation>
    <scope>NUCLEOTIDE SEQUENCE [LARGE SCALE MRNA]</scope>
    <source>
        <tissue>Brain</tissue>
    </source>
</reference>
<organism>
    <name type="scientific">Xenopus tropicalis</name>
    <name type="common">Western clawed frog</name>
    <name type="synonym">Silurana tropicalis</name>
    <dbReference type="NCBI Taxonomy" id="8364"/>
    <lineage>
        <taxon>Eukaryota</taxon>
        <taxon>Metazoa</taxon>
        <taxon>Chordata</taxon>
        <taxon>Craniata</taxon>
        <taxon>Vertebrata</taxon>
        <taxon>Euteleostomi</taxon>
        <taxon>Amphibia</taxon>
        <taxon>Batrachia</taxon>
        <taxon>Anura</taxon>
        <taxon>Pipoidea</taxon>
        <taxon>Pipidae</taxon>
        <taxon>Xenopodinae</taxon>
        <taxon>Xenopus</taxon>
        <taxon>Silurana</taxon>
    </lineage>
</organism>
<comment type="function">
    <text evidence="2">Secreted enzyme that regulates the endogenous N-fatty acyl amino acid (NAAs) tissue and circulating levels by functioning as a bidirectional NAA synthase/hydrolase. It condenses free fatty acids and free amino acids to generate NAAs and bidirectionally catalyzes the reverse hydrolysis reaction. Some of these NAAs stimulate oxidative metabolism via mitochondrial uncoupling, increasing energy expenditure in a UPC1-independent manner. Thereby, this secreted protein may indirectly regulate whole body energy expenditure. PM20D1 circulates in tight association with both low- and high-density (LDL and HDL,respectively) lipoprotein particles.</text>
</comment>
<comment type="catalytic activity">
    <reaction evidence="2">
        <text>an N-acyl-L-amino acid + H2O = an L-alpha-amino acid + a carboxylate</text>
        <dbReference type="Rhea" id="RHEA:15565"/>
        <dbReference type="ChEBI" id="CHEBI:15377"/>
        <dbReference type="ChEBI" id="CHEBI:29067"/>
        <dbReference type="ChEBI" id="CHEBI:59869"/>
        <dbReference type="ChEBI" id="CHEBI:59874"/>
        <dbReference type="EC" id="3.5.1.14"/>
    </reaction>
    <physiologicalReaction direction="left-to-right" evidence="2">
        <dbReference type="Rhea" id="RHEA:15566"/>
    </physiologicalReaction>
    <physiologicalReaction direction="right-to-left" evidence="2">
        <dbReference type="Rhea" id="RHEA:15567"/>
    </physiologicalReaction>
</comment>
<comment type="catalytic activity">
    <reaction evidence="2">
        <text>an N-acyl-aromatic L-alpha-amino acid + H2O = an aromatic L-alpha-amino acid + a carboxylate</text>
        <dbReference type="Rhea" id="RHEA:54184"/>
        <dbReference type="ChEBI" id="CHEBI:15377"/>
        <dbReference type="ChEBI" id="CHEBI:29067"/>
        <dbReference type="ChEBI" id="CHEBI:84824"/>
        <dbReference type="ChEBI" id="CHEBI:138093"/>
        <dbReference type="EC" id="3.5.1.114"/>
    </reaction>
    <physiologicalReaction direction="left-to-right" evidence="2">
        <dbReference type="Rhea" id="RHEA:54185"/>
    </physiologicalReaction>
    <physiologicalReaction direction="right-to-left" evidence="2">
        <dbReference type="Rhea" id="RHEA:54186"/>
    </physiologicalReaction>
</comment>
<comment type="catalytic activity">
    <reaction evidence="2">
        <text>N-(5Z,8Z,11Z,14Z)-eicosatetraenoyl-glycine + H2O = (5Z,8Z,11Z,14Z)-eicosatetraenoate + glycine</text>
        <dbReference type="Rhea" id="RHEA:64108"/>
        <dbReference type="ChEBI" id="CHEBI:15377"/>
        <dbReference type="ChEBI" id="CHEBI:32395"/>
        <dbReference type="ChEBI" id="CHEBI:57305"/>
        <dbReference type="ChEBI" id="CHEBI:59002"/>
    </reaction>
    <physiologicalReaction direction="left-to-right" evidence="2">
        <dbReference type="Rhea" id="RHEA:64109"/>
    </physiologicalReaction>
    <physiologicalReaction direction="right-to-left" evidence="2">
        <dbReference type="Rhea" id="RHEA:64110"/>
    </physiologicalReaction>
</comment>
<comment type="catalytic activity">
    <reaction evidence="2">
        <text>N-hexadecanoyl-L-phenylalanine + H2O = hexadecanoate + L-phenylalanine</text>
        <dbReference type="Rhea" id="RHEA:64124"/>
        <dbReference type="ChEBI" id="CHEBI:7896"/>
        <dbReference type="ChEBI" id="CHEBI:15377"/>
        <dbReference type="ChEBI" id="CHEBI:58095"/>
        <dbReference type="ChEBI" id="CHEBI:149699"/>
    </reaction>
    <physiologicalReaction direction="left-to-right" evidence="2">
        <dbReference type="Rhea" id="RHEA:64125"/>
    </physiologicalReaction>
</comment>
<comment type="catalytic activity">
    <reaction evidence="2">
        <text>N-octadecanoyl-L-phenylalanine + H2O = octadecanoate + L-phenylalanine</text>
        <dbReference type="Rhea" id="RHEA:64128"/>
        <dbReference type="ChEBI" id="CHEBI:15377"/>
        <dbReference type="ChEBI" id="CHEBI:25629"/>
        <dbReference type="ChEBI" id="CHEBI:58095"/>
        <dbReference type="ChEBI" id="CHEBI:149700"/>
    </reaction>
    <physiologicalReaction direction="left-to-right" evidence="2">
        <dbReference type="Rhea" id="RHEA:64129"/>
    </physiologicalReaction>
</comment>
<comment type="catalytic activity">
    <reaction evidence="2">
        <text>N-(4Z,7Z,10Z,13Z,16Z,19Z-docosahexaenoyl)-L-phenylalanine + H2O = (4Z,7Z,10Z,13Z,16Z,19Z)-docosahexaenoate + L-phenylalanine</text>
        <dbReference type="Rhea" id="RHEA:64132"/>
        <dbReference type="ChEBI" id="CHEBI:15377"/>
        <dbReference type="ChEBI" id="CHEBI:58095"/>
        <dbReference type="ChEBI" id="CHEBI:77016"/>
        <dbReference type="ChEBI" id="CHEBI:149701"/>
    </reaction>
    <physiologicalReaction direction="left-to-right" evidence="2">
        <dbReference type="Rhea" id="RHEA:64133"/>
    </physiologicalReaction>
</comment>
<comment type="catalytic activity">
    <reaction evidence="2">
        <text>N-(9Z-octadecenoyl)-L-asparagine + H2O = L-asparagine + (9Z)-octadecenoate</text>
        <dbReference type="Rhea" id="RHEA:64136"/>
        <dbReference type="ChEBI" id="CHEBI:15377"/>
        <dbReference type="ChEBI" id="CHEBI:30823"/>
        <dbReference type="ChEBI" id="CHEBI:58048"/>
        <dbReference type="ChEBI" id="CHEBI:149730"/>
    </reaction>
    <physiologicalReaction direction="left-to-right" evidence="2">
        <dbReference type="Rhea" id="RHEA:64137"/>
    </physiologicalReaction>
</comment>
<comment type="catalytic activity">
    <reaction evidence="2">
        <text>(9Z)-octadecenoate + glycine = N-(9Z-octadecenoyl)glycine + H2O</text>
        <dbReference type="Rhea" id="RHEA:51316"/>
        <dbReference type="ChEBI" id="CHEBI:15377"/>
        <dbReference type="ChEBI" id="CHEBI:30823"/>
        <dbReference type="ChEBI" id="CHEBI:57305"/>
        <dbReference type="ChEBI" id="CHEBI:133992"/>
    </reaction>
    <physiologicalReaction direction="right-to-left" evidence="2">
        <dbReference type="Rhea" id="RHEA:51318"/>
    </physiologicalReaction>
</comment>
<comment type="catalytic activity">
    <reaction evidence="2">
        <text>N-(9Z-octadecenoyl)-L-lysine + H2O = L-lysine + (9Z)-octadecenoate</text>
        <dbReference type="Rhea" id="RHEA:64192"/>
        <dbReference type="ChEBI" id="CHEBI:15377"/>
        <dbReference type="ChEBI" id="CHEBI:30823"/>
        <dbReference type="ChEBI" id="CHEBI:32551"/>
        <dbReference type="ChEBI" id="CHEBI:149731"/>
    </reaction>
    <physiologicalReaction direction="left-to-right" evidence="2">
        <dbReference type="Rhea" id="RHEA:64193"/>
    </physiologicalReaction>
</comment>
<comment type="catalytic activity">
    <reaction evidence="2">
        <text>N-(9Z-octadecenoyl)-L-methionine + H2O = (9Z)-octadecenoate + L-methionine</text>
        <dbReference type="Rhea" id="RHEA:64144"/>
        <dbReference type="ChEBI" id="CHEBI:15377"/>
        <dbReference type="ChEBI" id="CHEBI:30823"/>
        <dbReference type="ChEBI" id="CHEBI:57844"/>
        <dbReference type="ChEBI" id="CHEBI:149732"/>
    </reaction>
    <physiologicalReaction direction="left-to-right" evidence="2">
        <dbReference type="Rhea" id="RHEA:64145"/>
    </physiologicalReaction>
</comment>
<comment type="catalytic activity">
    <reaction evidence="2">
        <text>N-(9Z-octadecenoyl)-L-serine + H2O = L-serine + (9Z)-octadecenoate</text>
        <dbReference type="Rhea" id="RHEA:51352"/>
        <dbReference type="ChEBI" id="CHEBI:15377"/>
        <dbReference type="ChEBI" id="CHEBI:30823"/>
        <dbReference type="ChEBI" id="CHEBI:33384"/>
        <dbReference type="ChEBI" id="CHEBI:134031"/>
    </reaction>
    <physiologicalReaction direction="left-to-right" evidence="2">
        <dbReference type="Rhea" id="RHEA:51353"/>
    </physiologicalReaction>
</comment>
<comment type="catalytic activity">
    <reaction evidence="2">
        <text>N-(9Z-octadecenoyl)-L-tryptophan + H2O = L-tryptophan + (9Z)-octadecenoate</text>
        <dbReference type="Rhea" id="RHEA:64176"/>
        <dbReference type="ChEBI" id="CHEBI:15377"/>
        <dbReference type="ChEBI" id="CHEBI:30823"/>
        <dbReference type="ChEBI" id="CHEBI:57912"/>
        <dbReference type="ChEBI" id="CHEBI:149733"/>
    </reaction>
    <physiologicalReaction direction="left-to-right" evidence="2">
        <dbReference type="Rhea" id="RHEA:64177"/>
    </physiologicalReaction>
</comment>
<comment type="catalytic activity">
    <reaction evidence="2">
        <text>N-(9Z-octadecenoyl)-L-tyrosine + H2O = L-tyrosine + (9Z)-octadecenoate</text>
        <dbReference type="Rhea" id="RHEA:64184"/>
        <dbReference type="ChEBI" id="CHEBI:15377"/>
        <dbReference type="ChEBI" id="CHEBI:30823"/>
        <dbReference type="ChEBI" id="CHEBI:58315"/>
        <dbReference type="ChEBI" id="CHEBI:149734"/>
    </reaction>
    <physiologicalReaction direction="left-to-right" evidence="2">
        <dbReference type="Rhea" id="RHEA:64185"/>
    </physiologicalReaction>
</comment>
<comment type="catalytic activity">
    <reaction evidence="2">
        <text>N-(9Z-octadecenoyl)-L-glutamine + H2O = L-glutamine + (9Z)-octadecenoate</text>
        <dbReference type="Rhea" id="RHEA:51356"/>
        <dbReference type="ChEBI" id="CHEBI:15377"/>
        <dbReference type="ChEBI" id="CHEBI:30823"/>
        <dbReference type="ChEBI" id="CHEBI:58359"/>
        <dbReference type="ChEBI" id="CHEBI:134033"/>
    </reaction>
    <physiologicalReaction direction="left-to-right" evidence="2">
        <dbReference type="Rhea" id="RHEA:51357"/>
    </physiologicalReaction>
</comment>
<comment type="catalytic activity">
    <reaction evidence="2">
        <text>N-(5Z,8Z,11Z,14Z-eicosatetraenoyl)-L-serine + H2O = (5Z,8Z,11Z,14Z)-eicosatetraenoate + L-serine</text>
        <dbReference type="Rhea" id="RHEA:64116"/>
        <dbReference type="ChEBI" id="CHEBI:15377"/>
        <dbReference type="ChEBI" id="CHEBI:32395"/>
        <dbReference type="ChEBI" id="CHEBI:33384"/>
        <dbReference type="ChEBI" id="CHEBI:149697"/>
    </reaction>
    <physiologicalReaction direction="left-to-right" evidence="2">
        <dbReference type="Rhea" id="RHEA:64117"/>
    </physiologicalReaction>
    <physiologicalReaction direction="right-to-left" evidence="2">
        <dbReference type="Rhea" id="RHEA:64118"/>
    </physiologicalReaction>
</comment>
<comment type="catalytic activity">
    <reaction evidence="2">
        <text>(5Z,8Z,11Z,14Z)-eicosatetraenoate + L-phenylalanine = N-(5Z,8Z,11Z,14Z-eicosatetraenoyl)-L-phenylalanine + H2O</text>
        <dbReference type="Rhea" id="RHEA:51312"/>
        <dbReference type="ChEBI" id="CHEBI:15377"/>
        <dbReference type="ChEBI" id="CHEBI:32395"/>
        <dbReference type="ChEBI" id="CHEBI:58095"/>
        <dbReference type="ChEBI" id="CHEBI:134022"/>
    </reaction>
    <physiologicalReaction direction="left-to-right" evidence="2">
        <dbReference type="Rhea" id="RHEA:51313"/>
    </physiologicalReaction>
    <physiologicalReaction direction="right-to-left" evidence="2">
        <dbReference type="Rhea" id="RHEA:51314"/>
    </physiologicalReaction>
</comment>
<comment type="catalytic activity">
    <reaction evidence="2">
        <text>N-(9Z-octadecenoyl)-L-leucine + H2O = L-leucine + (9Z)-octadecenoate</text>
        <dbReference type="Rhea" id="RHEA:51360"/>
        <dbReference type="ChEBI" id="CHEBI:15377"/>
        <dbReference type="ChEBI" id="CHEBI:30823"/>
        <dbReference type="ChEBI" id="CHEBI:57427"/>
        <dbReference type="ChEBI" id="CHEBI:134035"/>
    </reaction>
    <physiologicalReaction direction="left-to-right" evidence="2">
        <dbReference type="Rhea" id="RHEA:51361"/>
    </physiologicalReaction>
    <physiologicalReaction direction="right-to-left" evidence="2">
        <dbReference type="Rhea" id="RHEA:51362"/>
    </physiologicalReaction>
</comment>
<comment type="catalytic activity">
    <reaction evidence="2">
        <text>L-phenylalanine + (9Z)-octadecenoate = N-(9Z-octadecenoyl)-L-phenylalanine + H2O</text>
        <dbReference type="Rhea" id="RHEA:51300"/>
        <dbReference type="ChEBI" id="CHEBI:15377"/>
        <dbReference type="ChEBI" id="CHEBI:30823"/>
        <dbReference type="ChEBI" id="CHEBI:58095"/>
        <dbReference type="ChEBI" id="CHEBI:134020"/>
    </reaction>
    <physiologicalReaction direction="left-to-right" evidence="2">
        <dbReference type="Rhea" id="RHEA:51301"/>
    </physiologicalReaction>
    <physiologicalReaction direction="right-to-left" evidence="2">
        <dbReference type="Rhea" id="RHEA:51302"/>
    </physiologicalReaction>
</comment>
<comment type="activity regulation">
    <text evidence="2">Lipoproteins are powerful coactivators of PM20D1 activity in vitro and NAA biosynthesis in vivo.</text>
</comment>
<comment type="pathway">
    <text evidence="2">Amino-acid metabolism.</text>
</comment>
<comment type="pathway">
    <text evidence="2">Energy metabolism; electron transfer.</text>
</comment>
<comment type="pathway">
    <text evidence="2">Lipid metabolism; fatty acid metabolism.</text>
</comment>
<comment type="subcellular location">
    <subcellularLocation>
        <location evidence="2">Secreted</location>
    </subcellularLocation>
</comment>
<comment type="similarity">
    <text evidence="4">Belongs to the peptidase M20A family.</text>
</comment>
<sequence length="512" mass="56710">MAVSRWKAVGSTLLAAFLVGLVVLIAVLLIRTYTLPTAVRKWNRNESLITELAEKERKQLVEALKGAIRIPTVSFSEEEQNTTALREFGEYIQKVFPQVFSSSLIQHEVLGGYSHLFKVQGSDHNLLPYMLLAHIDVVPAPPESWEVPPFSGEERDGYIYGRGTLDDKNCVIGILQSLEFLLKRGHKPRRSFYIGLGHDEEISGHKGAQKIVEKLQSQGVKLAFVLDEGLAVLDGVIQGISQPVALVGTTEKGSVTLDLTVNRLPGHSSMPPSETSIGILAAAVSRLEQNMMPNMFGNGPEQDMFEHLSTKFDFPLNIIMANLWLFSPILSRILELSPSTNAIVRTTTALTIFKAGIKSNVIPPTATATVNFRLHPAQTVQEVLDIVQNTIKDERVELSVLNSFDPLPVSPNDMSLGYHILQRTIHDVFSGPPVAPGVCVGNTDSRHFVNLTNSIYRFSPVVLKKEDVDRIHGLNERISKEAIELLVQFYIQLIQNSDTDNIPPPHLDTHEL</sequence>
<dbReference type="EC" id="3.5.1.114" evidence="2"/>
<dbReference type="EC" id="3.5.1.14" evidence="2"/>
<dbReference type="EMBL" id="BC124564">
    <property type="protein sequence ID" value="AAI24565.1"/>
    <property type="molecule type" value="mRNA"/>
</dbReference>
<dbReference type="RefSeq" id="NP_001120523.1">
    <property type="nucleotide sequence ID" value="NM_001127051.1"/>
</dbReference>
<dbReference type="SMR" id="Q08BT9"/>
<dbReference type="FunCoup" id="Q08BT9">
    <property type="interactions" value="52"/>
</dbReference>
<dbReference type="STRING" id="8364.ENSXETP00000006945"/>
<dbReference type="GlyCosmos" id="Q08BT9">
    <property type="glycosylation" value="3 sites, No reported glycans"/>
</dbReference>
<dbReference type="PaxDb" id="8364-ENSXETP00000013076"/>
<dbReference type="DNASU" id="100145660"/>
<dbReference type="GeneID" id="100145660"/>
<dbReference type="KEGG" id="xtr:100145660"/>
<dbReference type="AGR" id="Xenbase:XB-GENE-996553"/>
<dbReference type="CTD" id="148811"/>
<dbReference type="Xenbase" id="XB-GENE-996553">
    <property type="gene designation" value="pm20d1"/>
</dbReference>
<dbReference type="eggNOG" id="KOG2275">
    <property type="taxonomic scope" value="Eukaryota"/>
</dbReference>
<dbReference type="HOGENOM" id="CLU_021802_11_1_1"/>
<dbReference type="InParanoid" id="Q08BT9"/>
<dbReference type="OMA" id="DWTHHPF"/>
<dbReference type="OrthoDB" id="3064516at2759"/>
<dbReference type="PhylomeDB" id="Q08BT9"/>
<dbReference type="Reactome" id="R-XTR-9673163">
    <property type="pathway name" value="Oleoyl-phe metabolism"/>
</dbReference>
<dbReference type="UniPathway" id="UPA00092"/>
<dbReference type="UniPathway" id="UPA00199"/>
<dbReference type="Proteomes" id="UP000008143">
    <property type="component" value="Chromosome 2"/>
</dbReference>
<dbReference type="Bgee" id="ENSXETG00000005950">
    <property type="expression patterns" value="Expressed in liver and 8 other cell types or tissues"/>
</dbReference>
<dbReference type="GO" id="GO:0005615">
    <property type="term" value="C:extracellular space"/>
    <property type="evidence" value="ECO:0000250"/>
    <property type="project" value="UniProtKB"/>
</dbReference>
<dbReference type="GO" id="GO:0004046">
    <property type="term" value="F:aminoacylase activity"/>
    <property type="evidence" value="ECO:0007669"/>
    <property type="project" value="UniProtKB-EC"/>
</dbReference>
<dbReference type="GO" id="GO:0016811">
    <property type="term" value="F:hydrolase activity, acting on carbon-nitrogen (but not peptide) bonds, in linear amides"/>
    <property type="evidence" value="ECO:0000250"/>
    <property type="project" value="UniProtKB"/>
</dbReference>
<dbReference type="GO" id="GO:0016829">
    <property type="term" value="F:lyase activity"/>
    <property type="evidence" value="ECO:0007669"/>
    <property type="project" value="UniProtKB-KW"/>
</dbReference>
<dbReference type="GO" id="GO:0046872">
    <property type="term" value="F:metal ion binding"/>
    <property type="evidence" value="ECO:0007669"/>
    <property type="project" value="UniProtKB-KW"/>
</dbReference>
<dbReference type="GO" id="GO:0008233">
    <property type="term" value="F:peptidase activity"/>
    <property type="evidence" value="ECO:0007669"/>
    <property type="project" value="UniProtKB-KW"/>
</dbReference>
<dbReference type="GO" id="GO:1990845">
    <property type="term" value="P:adaptive thermogenesis"/>
    <property type="evidence" value="ECO:0000250"/>
    <property type="project" value="UniProtKB"/>
</dbReference>
<dbReference type="GO" id="GO:0043604">
    <property type="term" value="P:amide biosynthetic process"/>
    <property type="evidence" value="ECO:0000250"/>
    <property type="project" value="UniProtKB"/>
</dbReference>
<dbReference type="GO" id="GO:0043605">
    <property type="term" value="P:amide catabolic process"/>
    <property type="evidence" value="ECO:0000250"/>
    <property type="project" value="UniProtKB"/>
</dbReference>
<dbReference type="GO" id="GO:0006520">
    <property type="term" value="P:amino acid metabolic process"/>
    <property type="evidence" value="ECO:0000250"/>
    <property type="project" value="UniProtKB"/>
</dbReference>
<dbReference type="GO" id="GO:0097009">
    <property type="term" value="P:energy homeostasis"/>
    <property type="evidence" value="ECO:0000250"/>
    <property type="project" value="UniProtKB"/>
</dbReference>
<dbReference type="GO" id="GO:0006631">
    <property type="term" value="P:fatty acid metabolic process"/>
    <property type="evidence" value="ECO:0007669"/>
    <property type="project" value="UniProtKB-UniPathway"/>
</dbReference>
<dbReference type="GO" id="GO:0006629">
    <property type="term" value="P:lipid metabolic process"/>
    <property type="evidence" value="ECO:0000250"/>
    <property type="project" value="UniProtKB"/>
</dbReference>
<dbReference type="GO" id="GO:0006508">
    <property type="term" value="P:proteolysis"/>
    <property type="evidence" value="ECO:0007669"/>
    <property type="project" value="UniProtKB-KW"/>
</dbReference>
<dbReference type="GO" id="GO:0022904">
    <property type="term" value="P:respiratory electron transport chain"/>
    <property type="evidence" value="ECO:0007669"/>
    <property type="project" value="UniProtKB-UniPathway"/>
</dbReference>
<dbReference type="CDD" id="cd05674">
    <property type="entry name" value="M20_yscS"/>
    <property type="match status" value="1"/>
</dbReference>
<dbReference type="FunFam" id="1.10.150.900:FF:000003">
    <property type="entry name" value="N-fatty-acyl-amino acid synthase/hydrolase PM20D1"/>
    <property type="match status" value="1"/>
</dbReference>
<dbReference type="FunFam" id="3.40.630.10:FF:000027">
    <property type="entry name" value="N-fatty-acyl-amino acid synthase/hydrolase PM20D1"/>
    <property type="match status" value="1"/>
</dbReference>
<dbReference type="Gene3D" id="1.10.150.900">
    <property type="match status" value="1"/>
</dbReference>
<dbReference type="Gene3D" id="3.30.70.360">
    <property type="match status" value="1"/>
</dbReference>
<dbReference type="Gene3D" id="3.40.630.10">
    <property type="entry name" value="Zn peptidases"/>
    <property type="match status" value="1"/>
</dbReference>
<dbReference type="InterPro" id="IPR036264">
    <property type="entry name" value="Bact_exopeptidase_dim_dom"/>
</dbReference>
<dbReference type="InterPro" id="IPR047177">
    <property type="entry name" value="Pept_M20A"/>
</dbReference>
<dbReference type="InterPro" id="IPR002933">
    <property type="entry name" value="Peptidase_M20"/>
</dbReference>
<dbReference type="InterPro" id="IPR011650">
    <property type="entry name" value="Peptidase_M20_dimer"/>
</dbReference>
<dbReference type="PANTHER" id="PTHR45962">
    <property type="entry name" value="N-FATTY-ACYL-AMINO ACID SYNTHASE/HYDROLASE PM20D1"/>
    <property type="match status" value="1"/>
</dbReference>
<dbReference type="PANTHER" id="PTHR45962:SF1">
    <property type="entry name" value="N-FATTY-ACYL-AMINO ACID SYNTHASE_HYDROLASE PM20D1"/>
    <property type="match status" value="1"/>
</dbReference>
<dbReference type="Pfam" id="PF07687">
    <property type="entry name" value="M20_dimer"/>
    <property type="match status" value="1"/>
</dbReference>
<dbReference type="Pfam" id="PF01546">
    <property type="entry name" value="Peptidase_M20"/>
    <property type="match status" value="1"/>
</dbReference>
<dbReference type="SUPFAM" id="SSF55031">
    <property type="entry name" value="Bacterial exopeptidase dimerisation domain"/>
    <property type="match status" value="1"/>
</dbReference>
<dbReference type="SUPFAM" id="SSF53187">
    <property type="entry name" value="Zn-dependent exopeptidases"/>
    <property type="match status" value="1"/>
</dbReference>
<evidence type="ECO:0000250" key="1"/>
<evidence type="ECO:0000250" key="2">
    <source>
        <dbReference type="UniProtKB" id="Q8C165"/>
    </source>
</evidence>
<evidence type="ECO:0000255" key="3"/>
<evidence type="ECO:0000305" key="4"/>
<keyword id="KW-0325">Glycoprotein</keyword>
<keyword id="KW-0378">Hydrolase</keyword>
<keyword id="KW-0443">Lipid metabolism</keyword>
<keyword id="KW-0456">Lyase</keyword>
<keyword id="KW-0479">Metal-binding</keyword>
<keyword id="KW-0645">Protease</keyword>
<keyword id="KW-1185">Reference proteome</keyword>
<keyword id="KW-0964">Secreted</keyword>
<keyword id="KW-0732">Signal</keyword>
<keyword id="KW-0862">Zinc</keyword>
<accession>Q08BT9</accession>